<feature type="signal peptide" evidence="2">
    <location>
        <begin position="1"/>
        <end position="20"/>
    </location>
</feature>
<feature type="chain" id="PRO_0000036066" description="2-hydroxyacylsphingosine 1-beta-galactosyltransferase">
    <location>
        <begin position="21"/>
        <end position="541"/>
    </location>
</feature>
<feature type="transmembrane region" description="Helical" evidence="2">
    <location>
        <begin position="472"/>
        <end position="492"/>
    </location>
</feature>
<feature type="glycosylation site" description="N-linked (GlcNAc...) asparagine" evidence="2 5">
    <location>
        <position position="78"/>
    </location>
</feature>
<feature type="glycosylation site" description="N-linked (GlcNAc...) asparagine" evidence="2 5">
    <location>
        <position position="333"/>
    </location>
</feature>
<feature type="glycosylation site" description="N-linked (GlcNAc...) asparagine" evidence="2">
    <location>
        <position position="442"/>
    </location>
</feature>
<accession>Q09426</accession>
<comment type="function">
    <text evidence="3 4">Catalyzes the transfer of galactose to ceramide, a key enzymatic step in the biosynthesis of galactocerebrosides, which are abundant sphingolipids of the myelin membrane of the central nervous system and peripheral nervous system. Galactosylates both hydroxy- and non-hydroxy fatty acid-containing ceramides and diglycerides (PubMed:8713090).</text>
</comment>
<comment type="catalytic activity">
    <reaction evidence="3 4">
        <text>an N-acylsphing-4-enine + UDP-alpha-D-galactose = a beta-D-galactosyl-(1&lt;-&gt;1')-N-acylsphing-4-enine + UDP + H(+)</text>
        <dbReference type="Rhea" id="RHEA:13093"/>
        <dbReference type="ChEBI" id="CHEBI:15378"/>
        <dbReference type="ChEBI" id="CHEBI:18390"/>
        <dbReference type="ChEBI" id="CHEBI:52639"/>
        <dbReference type="ChEBI" id="CHEBI:58223"/>
        <dbReference type="ChEBI" id="CHEBI:66914"/>
        <dbReference type="EC" id="2.4.1.47"/>
    </reaction>
    <physiologicalReaction direction="left-to-right" evidence="7">
        <dbReference type="Rhea" id="RHEA:13094"/>
    </physiologicalReaction>
</comment>
<comment type="catalytic activity">
    <reaction evidence="4">
        <text>N-(2-hydroxy-hexanoyl)-sphing-4-enine + UDP-alpha-D-galactose = N-(2-hydroxy-hexanoyl)-beta-D-galactosyl-sphing-4-enine + UDP + H(+)</text>
        <dbReference type="Rhea" id="RHEA:43400"/>
        <dbReference type="ChEBI" id="CHEBI:15378"/>
        <dbReference type="ChEBI" id="CHEBI:58223"/>
        <dbReference type="ChEBI" id="CHEBI:66914"/>
        <dbReference type="ChEBI" id="CHEBI:83244"/>
        <dbReference type="ChEBI" id="CHEBI:83246"/>
    </reaction>
    <physiologicalReaction direction="left-to-right" evidence="7">
        <dbReference type="Rhea" id="RHEA:43401"/>
    </physiologicalReaction>
</comment>
<comment type="catalytic activity">
    <reaction evidence="4">
        <text>N-(2-hydroxy-hexanoyl)-sphinganine + UDP-alpha-D-galactose = N-(2-hydroxyhexanoyl)-beta-D-galactosylsphinganine + UDP + H(+)</text>
        <dbReference type="Rhea" id="RHEA:43404"/>
        <dbReference type="ChEBI" id="CHEBI:15378"/>
        <dbReference type="ChEBI" id="CHEBI:58223"/>
        <dbReference type="ChEBI" id="CHEBI:66914"/>
        <dbReference type="ChEBI" id="CHEBI:83248"/>
        <dbReference type="ChEBI" id="CHEBI:83257"/>
    </reaction>
    <physiologicalReaction direction="left-to-right" evidence="7">
        <dbReference type="Rhea" id="RHEA:43405"/>
    </physiologicalReaction>
</comment>
<comment type="catalytic activity">
    <reaction evidence="1">
        <text>an N-acyl-sphingoid base + UDP-alpha-D-galactose = a D-galactosylceramide + UDP + H(+)</text>
        <dbReference type="Rhea" id="RHEA:48344"/>
        <dbReference type="ChEBI" id="CHEBI:15378"/>
        <dbReference type="ChEBI" id="CHEBI:36498"/>
        <dbReference type="ChEBI" id="CHEBI:58223"/>
        <dbReference type="ChEBI" id="CHEBI:66914"/>
        <dbReference type="ChEBI" id="CHEBI:83273"/>
    </reaction>
</comment>
<comment type="pathway">
    <text evidence="3 4">Sphingolipid metabolism; galactosylceramide biosynthesis.</text>
</comment>
<comment type="subcellular location">
    <subcellularLocation>
        <location evidence="6">Membrane</location>
        <topology evidence="6">Single-pass membrane protein</topology>
    </subcellularLocation>
    <subcellularLocation>
        <location evidence="4">Endoplasmic reticulum</location>
    </subcellularLocation>
</comment>
<comment type="tissue specificity">
    <text>Brain, restricted to the oligodendrocyte-containing cell layers of cerebrum and cerebellum.</text>
</comment>
<comment type="similarity">
    <text evidence="6">Belongs to the UDP-glycosyltransferase family.</text>
</comment>
<reference key="1">
    <citation type="journal article" date="1993" name="Proc. Natl. Acad. Sci. U.S.A.">
        <title>Ceramide UDPgalactosyltransferase from myelinating rat brain: purification, cloning, and expression.</title>
        <authorList>
            <person name="Schulte S."/>
            <person name="Stoffel W."/>
        </authorList>
    </citation>
    <scope>NUCLEOTIDE SEQUENCE [MRNA]</scope>
    <scope>FUNCTION</scope>
    <scope>CATALYTIC ACTIVITY</scope>
    <source>
        <strain>Wistar</strain>
        <tissue>Brain</tissue>
    </source>
</reference>
<reference key="2">
    <citation type="journal article" date="1994" name="J. Neurosci. Res.">
        <title>Isolation, characterization, and expression of cDNA clones that encode rat UDP-galactose: ceramide galactosyltransferase.</title>
        <authorList>
            <person name="Stahl N."/>
            <person name="Jurevics H."/>
            <person name="Morell P."/>
            <person name="Suzuki K."/>
            <person name="Popko B."/>
        </authorList>
    </citation>
    <scope>NUCLEOTIDE SEQUENCE [MRNA]</scope>
    <source>
        <strain>Sprague-Dawley</strain>
        <tissue>Brain</tissue>
    </source>
</reference>
<reference key="3">
    <citation type="journal article" date="1996" name="Biochem. J.">
        <title>Synthesis of non-hydroxy-galactosylceramides and galactosyldiglycerides by hydroxy-ceramide galactosyltransferase.</title>
        <authorList>
            <person name="van der Bijl P."/>
            <person name="Strous G.J."/>
            <person name="Lopes-Cardozo M."/>
            <person name="Thomas-Oates J."/>
            <person name="van Meer G."/>
        </authorList>
    </citation>
    <scope>FUNCTION</scope>
    <scope>CATALYTIC ACTIVITY</scope>
    <scope>PATHWAY</scope>
    <scope>SUBCELLULAR LOCATION</scope>
</reference>
<protein>
    <recommendedName>
        <fullName evidence="6">2-hydroxyacylsphingosine 1-beta-galactosyltransferase</fullName>
        <ecNumber evidence="3 4">2.4.1.47</ecNumber>
    </recommendedName>
    <alternativeName>
        <fullName>Ceramide UDP-galactosyltransferase</fullName>
        <shortName>CGalT</shortName>
    </alternativeName>
    <alternativeName>
        <fullName>Cerebroside synthase</fullName>
    </alternativeName>
    <alternativeName>
        <fullName>UDP-galactose-ceramide galactosyltransferase</fullName>
    </alternativeName>
</protein>
<dbReference type="EC" id="2.4.1.47" evidence="3 4"/>
<dbReference type="EMBL" id="L21698">
    <property type="protein sequence ID" value="AAA16108.1"/>
    <property type="molecule type" value="mRNA"/>
</dbReference>
<dbReference type="EMBL" id="U07683">
    <property type="protein sequence ID" value="AAA50212.1"/>
    <property type="molecule type" value="mRNA"/>
</dbReference>
<dbReference type="PIR" id="A48801">
    <property type="entry name" value="A48801"/>
</dbReference>
<dbReference type="RefSeq" id="NP_062149.1">
    <property type="nucleotide sequence ID" value="NM_019276.3"/>
</dbReference>
<dbReference type="RefSeq" id="XP_017446541.1">
    <property type="nucleotide sequence ID" value="XM_017591052.3"/>
</dbReference>
<dbReference type="RefSeq" id="XP_063138484.1">
    <property type="nucleotide sequence ID" value="XM_063282414.1"/>
</dbReference>
<dbReference type="SMR" id="Q09426"/>
<dbReference type="FunCoup" id="Q09426">
    <property type="interactions" value="602"/>
</dbReference>
<dbReference type="STRING" id="10116.ENSRNOP00000012676"/>
<dbReference type="SwissLipids" id="SLP:000000910"/>
<dbReference type="CAZy" id="GT1">
    <property type="family name" value="Glycosyltransferase Family 1"/>
</dbReference>
<dbReference type="GlyCosmos" id="Q09426">
    <property type="glycosylation" value="3 sites, No reported glycans"/>
</dbReference>
<dbReference type="GlyGen" id="Q09426">
    <property type="glycosylation" value="3 sites"/>
</dbReference>
<dbReference type="iPTMnet" id="Q09426"/>
<dbReference type="PhosphoSitePlus" id="Q09426"/>
<dbReference type="PaxDb" id="10116-ENSRNOP00000012676"/>
<dbReference type="Ensembl" id="ENSRNOT00000012676.5">
    <property type="protein sequence ID" value="ENSRNOP00000012676.2"/>
    <property type="gene ID" value="ENSRNOG00000009345.5"/>
</dbReference>
<dbReference type="GeneID" id="50555"/>
<dbReference type="KEGG" id="rno:50555"/>
<dbReference type="UCSC" id="RGD:3938">
    <property type="organism name" value="rat"/>
</dbReference>
<dbReference type="AGR" id="RGD:3938"/>
<dbReference type="CTD" id="7368"/>
<dbReference type="RGD" id="3938">
    <property type="gene designation" value="Ugt8"/>
</dbReference>
<dbReference type="eggNOG" id="KOG1192">
    <property type="taxonomic scope" value="Eukaryota"/>
</dbReference>
<dbReference type="GeneTree" id="ENSGT00940000156545"/>
<dbReference type="HOGENOM" id="CLU_012949_3_1_1"/>
<dbReference type="InParanoid" id="Q09426"/>
<dbReference type="OMA" id="WKYEGSA"/>
<dbReference type="OrthoDB" id="5835829at2759"/>
<dbReference type="PhylomeDB" id="Q09426"/>
<dbReference type="TreeFam" id="TF315472"/>
<dbReference type="Reactome" id="R-RNO-9840309">
    <property type="pathway name" value="Glycosphingolipid biosynthesis"/>
</dbReference>
<dbReference type="UniPathway" id="UPA00787"/>
<dbReference type="PRO" id="PR:Q09426"/>
<dbReference type="Proteomes" id="UP000002494">
    <property type="component" value="Chromosome 2"/>
</dbReference>
<dbReference type="Bgee" id="ENSRNOG00000009345">
    <property type="expression patterns" value="Expressed in cerebellum and 12 other cell types or tissues"/>
</dbReference>
<dbReference type="GO" id="GO:0005783">
    <property type="term" value="C:endoplasmic reticulum"/>
    <property type="evidence" value="ECO:0000314"/>
    <property type="project" value="UniProtKB"/>
</dbReference>
<dbReference type="GO" id="GO:0016020">
    <property type="term" value="C:membrane"/>
    <property type="evidence" value="ECO:0007669"/>
    <property type="project" value="UniProtKB-SubCell"/>
</dbReference>
<dbReference type="GO" id="GO:0003851">
    <property type="term" value="F:N-acylsphingosine galactosyltransferase activity"/>
    <property type="evidence" value="ECO:0000314"/>
    <property type="project" value="UniProtKB"/>
</dbReference>
<dbReference type="GO" id="GO:0008489">
    <property type="term" value="F:UDP-galactose:glucosylceramide beta-1,4-galactosyltransferase activity"/>
    <property type="evidence" value="ECO:0000315"/>
    <property type="project" value="RGD"/>
</dbReference>
<dbReference type="GO" id="GO:0007010">
    <property type="term" value="P:cytoskeleton organization"/>
    <property type="evidence" value="ECO:0000266"/>
    <property type="project" value="RGD"/>
</dbReference>
<dbReference type="GO" id="GO:0006682">
    <property type="term" value="P:galactosylceramide biosynthetic process"/>
    <property type="evidence" value="ECO:0000314"/>
    <property type="project" value="UniProtKB"/>
</dbReference>
<dbReference type="GO" id="GO:0006688">
    <property type="term" value="P:glycosphingolipid biosynthetic process"/>
    <property type="evidence" value="ECO:0000304"/>
    <property type="project" value="RGD"/>
</dbReference>
<dbReference type="GO" id="GO:0042552">
    <property type="term" value="P:myelination"/>
    <property type="evidence" value="ECO:0000304"/>
    <property type="project" value="RGD"/>
</dbReference>
<dbReference type="GO" id="GO:0048812">
    <property type="term" value="P:neuron projection morphogenesis"/>
    <property type="evidence" value="ECO:0000266"/>
    <property type="project" value="RGD"/>
</dbReference>
<dbReference type="GO" id="GO:0030913">
    <property type="term" value="P:paranodal junction assembly"/>
    <property type="evidence" value="ECO:0000266"/>
    <property type="project" value="RGD"/>
</dbReference>
<dbReference type="GO" id="GO:0002175">
    <property type="term" value="P:protein localization to paranode region of axon"/>
    <property type="evidence" value="ECO:0000266"/>
    <property type="project" value="RGD"/>
</dbReference>
<dbReference type="GO" id="GO:0035902">
    <property type="term" value="P:response to immobilization stress"/>
    <property type="evidence" value="ECO:0000270"/>
    <property type="project" value="RGD"/>
</dbReference>
<dbReference type="CDD" id="cd03784">
    <property type="entry name" value="GT1_Gtf-like"/>
    <property type="match status" value="1"/>
</dbReference>
<dbReference type="FunFam" id="3.40.50.2000:FF:000033">
    <property type="entry name" value="2-hydroxyacylsphingosine 1-beta-galactosyltransferase"/>
    <property type="match status" value="1"/>
</dbReference>
<dbReference type="FunFam" id="3.40.50.2000:FF:000001">
    <property type="entry name" value="UDP-glucuronosyltransferase"/>
    <property type="match status" value="1"/>
</dbReference>
<dbReference type="Gene3D" id="3.40.50.2000">
    <property type="entry name" value="Glycogen Phosphorylase B"/>
    <property type="match status" value="2"/>
</dbReference>
<dbReference type="InterPro" id="IPR050271">
    <property type="entry name" value="UDP-glycosyltransferase"/>
</dbReference>
<dbReference type="InterPro" id="IPR002213">
    <property type="entry name" value="UDP_glucos_trans"/>
</dbReference>
<dbReference type="InterPro" id="IPR035595">
    <property type="entry name" value="UDP_glycos_trans_CS"/>
</dbReference>
<dbReference type="PANTHER" id="PTHR48043:SF54">
    <property type="entry name" value="2-HYDROXYACYLSPHINGOSINE 1-BETA-GALACTOSYLTRANSFERASE"/>
    <property type="match status" value="1"/>
</dbReference>
<dbReference type="PANTHER" id="PTHR48043">
    <property type="entry name" value="EG:EG0003.4 PROTEIN-RELATED"/>
    <property type="match status" value="1"/>
</dbReference>
<dbReference type="Pfam" id="PF00201">
    <property type="entry name" value="UDPGT"/>
    <property type="match status" value="1"/>
</dbReference>
<dbReference type="SUPFAM" id="SSF53756">
    <property type="entry name" value="UDP-Glycosyltransferase/glycogen phosphorylase"/>
    <property type="match status" value="1"/>
</dbReference>
<dbReference type="PROSITE" id="PS00375">
    <property type="entry name" value="UDPGT"/>
    <property type="match status" value="1"/>
</dbReference>
<sequence length="541" mass="61126">MKSYTPYFMLLWSAVGIARAAKIIIVPPIMFESHLYIFKTLASALHERGHHTVFLLSEGRDIDPSNHYSLQRYPGIFNSTTSDAFLQSKMRNIFSGRLTAVELVDILDHYTKNCDMMVGNQALIQGLKKEKFDLLLVDPNDMCGFVIAHLLGVKYAVFSTGLWYPAEVGAPAPLAYVPEFNSLLTDRMNFLERMKNTGVYLISRMGVSFLVLPKYERIMQKYNLLPAKSMYDLVHGSSLWMLCTDVALEFPRPTLPNVVYVGGILTKPASPLPEDLQRWVDGAQEHGFVLVSFGAGVKYLSEDIANKLAGALGRLPQKVIWRFSGTKPKNLGNNTKLIEWLPQNDLLGHSNIRAFLSHGGLNSIFETMYHGVPVVGIPLFGDHYDTMTRVQAKGMGILLEWNTVTEGELYDALVKVINNPSYRQRAQKLSEIHKDQPGHPVNRTTYWIDYILRHDGAHHLRSAVHQISFCQYFLLDIAFVLLLGAVALYFIVSYVTKFIYRKVKSLCSRSTHSTVNGHYQNGILNGRYKGNGHIKHEKKVK</sequence>
<keyword id="KW-0256">Endoplasmic reticulum</keyword>
<keyword id="KW-0325">Glycoprotein</keyword>
<keyword id="KW-0328">Glycosyltransferase</keyword>
<keyword id="KW-0443">Lipid metabolism</keyword>
<keyword id="KW-0472">Membrane</keyword>
<keyword id="KW-1185">Reference proteome</keyword>
<keyword id="KW-0732">Signal</keyword>
<keyword id="KW-0746">Sphingolipid metabolism</keyword>
<keyword id="KW-0808">Transferase</keyword>
<keyword id="KW-0812">Transmembrane</keyword>
<keyword id="KW-1133">Transmembrane helix</keyword>
<evidence type="ECO:0000250" key="1">
    <source>
        <dbReference type="UniProtKB" id="Q16880"/>
    </source>
</evidence>
<evidence type="ECO:0000255" key="2"/>
<evidence type="ECO:0000269" key="3">
    <source>
    </source>
</evidence>
<evidence type="ECO:0000269" key="4">
    <source>
    </source>
</evidence>
<evidence type="ECO:0000303" key="5">
    <source>
    </source>
</evidence>
<evidence type="ECO:0000305" key="6"/>
<evidence type="ECO:0000305" key="7">
    <source>
    </source>
</evidence>
<evidence type="ECO:0000312" key="8">
    <source>
        <dbReference type="RGD" id="3938"/>
    </source>
</evidence>
<organism>
    <name type="scientific">Rattus norvegicus</name>
    <name type="common">Rat</name>
    <dbReference type="NCBI Taxonomy" id="10116"/>
    <lineage>
        <taxon>Eukaryota</taxon>
        <taxon>Metazoa</taxon>
        <taxon>Chordata</taxon>
        <taxon>Craniata</taxon>
        <taxon>Vertebrata</taxon>
        <taxon>Euteleostomi</taxon>
        <taxon>Mammalia</taxon>
        <taxon>Eutheria</taxon>
        <taxon>Euarchontoglires</taxon>
        <taxon>Glires</taxon>
        <taxon>Rodentia</taxon>
        <taxon>Myomorpha</taxon>
        <taxon>Muroidea</taxon>
        <taxon>Muridae</taxon>
        <taxon>Murinae</taxon>
        <taxon>Rattus</taxon>
    </lineage>
</organism>
<gene>
    <name evidence="8" type="primary">Ugt8</name>
    <name type="synonym">Cgt</name>
    <name type="synonym">Ugt4</name>
</gene>
<proteinExistence type="evidence at protein level"/>
<name>CGT_RAT</name>